<reference key="1">
    <citation type="submission" date="2007-07" db="EMBL/GenBank/DDBJ databases">
        <title>Complete sequence of Fervidobacterium nodosum Rt17-B1.</title>
        <authorList>
            <consortium name="US DOE Joint Genome Institute"/>
            <person name="Copeland A."/>
            <person name="Lucas S."/>
            <person name="Lapidus A."/>
            <person name="Barry K."/>
            <person name="Glavina del Rio T."/>
            <person name="Dalin E."/>
            <person name="Tice H."/>
            <person name="Pitluck S."/>
            <person name="Saunders E."/>
            <person name="Brettin T."/>
            <person name="Bruce D."/>
            <person name="Detter J.C."/>
            <person name="Han C."/>
            <person name="Schmutz J."/>
            <person name="Larimer F."/>
            <person name="Land M."/>
            <person name="Hauser L."/>
            <person name="Kyrpides N."/>
            <person name="Mikhailova N."/>
            <person name="Nelson K."/>
            <person name="Gogarten J.P."/>
            <person name="Noll K."/>
            <person name="Richardson P."/>
        </authorList>
    </citation>
    <scope>NUCLEOTIDE SEQUENCE [LARGE SCALE GENOMIC DNA]</scope>
    <source>
        <strain>ATCC 35602 / DSM 5306 / Rt17-B1</strain>
    </source>
</reference>
<organism>
    <name type="scientific">Fervidobacterium nodosum (strain ATCC 35602 / DSM 5306 / Rt17-B1)</name>
    <dbReference type="NCBI Taxonomy" id="381764"/>
    <lineage>
        <taxon>Bacteria</taxon>
        <taxon>Thermotogati</taxon>
        <taxon>Thermotogota</taxon>
        <taxon>Thermotogae</taxon>
        <taxon>Thermotogales</taxon>
        <taxon>Fervidobacteriaceae</taxon>
        <taxon>Fervidobacterium</taxon>
    </lineage>
</organism>
<dbReference type="EC" id="3.1.1.29" evidence="1"/>
<dbReference type="EMBL" id="CP000771">
    <property type="protein sequence ID" value="ABS60457.1"/>
    <property type="molecule type" value="Genomic_DNA"/>
</dbReference>
<dbReference type="RefSeq" id="WP_011993776.1">
    <property type="nucleotide sequence ID" value="NC_009718.1"/>
</dbReference>
<dbReference type="SMR" id="A7HKM4"/>
<dbReference type="STRING" id="381764.Fnod_0602"/>
<dbReference type="KEGG" id="fno:Fnod_0602"/>
<dbReference type="eggNOG" id="COG0193">
    <property type="taxonomic scope" value="Bacteria"/>
</dbReference>
<dbReference type="HOGENOM" id="CLU_062456_4_1_0"/>
<dbReference type="OrthoDB" id="9800507at2"/>
<dbReference type="Proteomes" id="UP000002415">
    <property type="component" value="Chromosome"/>
</dbReference>
<dbReference type="GO" id="GO:0005737">
    <property type="term" value="C:cytoplasm"/>
    <property type="evidence" value="ECO:0007669"/>
    <property type="project" value="UniProtKB-SubCell"/>
</dbReference>
<dbReference type="GO" id="GO:0004045">
    <property type="term" value="F:peptidyl-tRNA hydrolase activity"/>
    <property type="evidence" value="ECO:0007669"/>
    <property type="project" value="UniProtKB-UniRule"/>
</dbReference>
<dbReference type="GO" id="GO:0000049">
    <property type="term" value="F:tRNA binding"/>
    <property type="evidence" value="ECO:0007669"/>
    <property type="project" value="UniProtKB-UniRule"/>
</dbReference>
<dbReference type="GO" id="GO:0006515">
    <property type="term" value="P:protein quality control for misfolded or incompletely synthesized proteins"/>
    <property type="evidence" value="ECO:0007669"/>
    <property type="project" value="UniProtKB-UniRule"/>
</dbReference>
<dbReference type="GO" id="GO:0072344">
    <property type="term" value="P:rescue of stalled ribosome"/>
    <property type="evidence" value="ECO:0007669"/>
    <property type="project" value="UniProtKB-UniRule"/>
</dbReference>
<dbReference type="CDD" id="cd00462">
    <property type="entry name" value="PTH"/>
    <property type="match status" value="1"/>
</dbReference>
<dbReference type="FunFam" id="3.40.50.1470:FF:000001">
    <property type="entry name" value="Peptidyl-tRNA hydrolase"/>
    <property type="match status" value="1"/>
</dbReference>
<dbReference type="Gene3D" id="3.40.50.1470">
    <property type="entry name" value="Peptidyl-tRNA hydrolase"/>
    <property type="match status" value="1"/>
</dbReference>
<dbReference type="HAMAP" id="MF_00083">
    <property type="entry name" value="Pept_tRNA_hydro_bact"/>
    <property type="match status" value="1"/>
</dbReference>
<dbReference type="InterPro" id="IPR001328">
    <property type="entry name" value="Pept_tRNA_hydro"/>
</dbReference>
<dbReference type="InterPro" id="IPR018171">
    <property type="entry name" value="Pept_tRNA_hydro_CS"/>
</dbReference>
<dbReference type="InterPro" id="IPR036416">
    <property type="entry name" value="Pept_tRNA_hydro_sf"/>
</dbReference>
<dbReference type="NCBIfam" id="TIGR00447">
    <property type="entry name" value="pth"/>
    <property type="match status" value="1"/>
</dbReference>
<dbReference type="PANTHER" id="PTHR17224">
    <property type="entry name" value="PEPTIDYL-TRNA HYDROLASE"/>
    <property type="match status" value="1"/>
</dbReference>
<dbReference type="PANTHER" id="PTHR17224:SF1">
    <property type="entry name" value="PEPTIDYL-TRNA HYDROLASE"/>
    <property type="match status" value="1"/>
</dbReference>
<dbReference type="Pfam" id="PF01195">
    <property type="entry name" value="Pept_tRNA_hydro"/>
    <property type="match status" value="1"/>
</dbReference>
<dbReference type="SUPFAM" id="SSF53178">
    <property type="entry name" value="Peptidyl-tRNA hydrolase-like"/>
    <property type="match status" value="1"/>
</dbReference>
<dbReference type="PROSITE" id="PS01195">
    <property type="entry name" value="PEPT_TRNA_HYDROL_1"/>
    <property type="match status" value="1"/>
</dbReference>
<dbReference type="PROSITE" id="PS01196">
    <property type="entry name" value="PEPT_TRNA_HYDROL_2"/>
    <property type="match status" value="1"/>
</dbReference>
<evidence type="ECO:0000255" key="1">
    <source>
        <dbReference type="HAMAP-Rule" id="MF_00083"/>
    </source>
</evidence>
<accession>A7HKM4</accession>
<comment type="function">
    <text evidence="1">Hydrolyzes ribosome-free peptidyl-tRNAs (with 1 or more amino acids incorporated), which drop off the ribosome during protein synthesis, or as a result of ribosome stalling.</text>
</comment>
<comment type="function">
    <text evidence="1">Catalyzes the release of premature peptidyl moieties from peptidyl-tRNA molecules trapped in stalled 50S ribosomal subunits, and thus maintains levels of free tRNAs and 50S ribosomes.</text>
</comment>
<comment type="catalytic activity">
    <reaction evidence="1">
        <text>an N-acyl-L-alpha-aminoacyl-tRNA + H2O = an N-acyl-L-amino acid + a tRNA + H(+)</text>
        <dbReference type="Rhea" id="RHEA:54448"/>
        <dbReference type="Rhea" id="RHEA-COMP:10123"/>
        <dbReference type="Rhea" id="RHEA-COMP:13883"/>
        <dbReference type="ChEBI" id="CHEBI:15377"/>
        <dbReference type="ChEBI" id="CHEBI:15378"/>
        <dbReference type="ChEBI" id="CHEBI:59874"/>
        <dbReference type="ChEBI" id="CHEBI:78442"/>
        <dbReference type="ChEBI" id="CHEBI:138191"/>
        <dbReference type="EC" id="3.1.1.29"/>
    </reaction>
</comment>
<comment type="subunit">
    <text evidence="1">Monomer.</text>
</comment>
<comment type="subcellular location">
    <subcellularLocation>
        <location evidence="1">Cytoplasm</location>
    </subcellularLocation>
</comment>
<comment type="similarity">
    <text evidence="1">Belongs to the PTH family.</text>
</comment>
<sequence>MIVIGLGNPGEKYSNTRHNVGFMVLDRLSNSWKKGPNYLYSDINISGEKIKLIKPMTYMNLSGEVFKYLPHDDIIVVYDDLDLPLGKIRIRKNGSAGGHNGIKSIISFIGQDFPRIRVGIGPKPENIDAADYVLSNFTKEEFEVLDKIINLCTEAIEYIVENGIDKAMNRYNSIEISTGK</sequence>
<keyword id="KW-0963">Cytoplasm</keyword>
<keyword id="KW-0378">Hydrolase</keyword>
<keyword id="KW-1185">Reference proteome</keyword>
<keyword id="KW-0694">RNA-binding</keyword>
<keyword id="KW-0820">tRNA-binding</keyword>
<protein>
    <recommendedName>
        <fullName evidence="1">Peptidyl-tRNA hydrolase</fullName>
        <shortName evidence="1">Pth</shortName>
        <ecNumber evidence="1">3.1.1.29</ecNumber>
    </recommendedName>
</protein>
<gene>
    <name evidence="1" type="primary">pth</name>
    <name type="ordered locus">Fnod_0602</name>
</gene>
<name>PTH_FERNB</name>
<feature type="chain" id="PRO_1000071228" description="Peptidyl-tRNA hydrolase">
    <location>
        <begin position="1"/>
        <end position="180"/>
    </location>
</feature>
<feature type="active site" description="Proton acceptor" evidence="1">
    <location>
        <position position="18"/>
    </location>
</feature>
<feature type="binding site" evidence="1">
    <location>
        <position position="13"/>
    </location>
    <ligand>
        <name>tRNA</name>
        <dbReference type="ChEBI" id="CHEBI:17843"/>
    </ligand>
</feature>
<feature type="binding site" evidence="1">
    <location>
        <position position="58"/>
    </location>
    <ligand>
        <name>tRNA</name>
        <dbReference type="ChEBI" id="CHEBI:17843"/>
    </ligand>
</feature>
<feature type="binding site" evidence="1">
    <location>
        <position position="60"/>
    </location>
    <ligand>
        <name>tRNA</name>
        <dbReference type="ChEBI" id="CHEBI:17843"/>
    </ligand>
</feature>
<feature type="binding site" evidence="1">
    <location>
        <position position="100"/>
    </location>
    <ligand>
        <name>tRNA</name>
        <dbReference type="ChEBI" id="CHEBI:17843"/>
    </ligand>
</feature>
<feature type="site" description="Discriminates between blocked and unblocked aminoacyl-tRNA" evidence="1">
    <location>
        <position position="8"/>
    </location>
</feature>
<feature type="site" description="Stabilizes the basic form of H active site to accept a proton" evidence="1">
    <location>
        <position position="79"/>
    </location>
</feature>
<proteinExistence type="inferred from homology"/>